<name>UREG_ACIB5</name>
<feature type="chain" id="PRO_1000145158" description="Urease accessory protein UreG">
    <location>
        <begin position="1"/>
        <end position="204"/>
    </location>
</feature>
<feature type="binding site" evidence="1">
    <location>
        <begin position="13"/>
        <end position="20"/>
    </location>
    <ligand>
        <name>GTP</name>
        <dbReference type="ChEBI" id="CHEBI:37565"/>
    </ligand>
</feature>
<reference key="1">
    <citation type="journal article" date="2008" name="J. Bacteriol.">
        <title>Comparative genome sequence analysis of multidrug-resistant Acinetobacter baumannii.</title>
        <authorList>
            <person name="Adams M.D."/>
            <person name="Goglin K."/>
            <person name="Molyneaux N."/>
            <person name="Hujer K.M."/>
            <person name="Lavender H."/>
            <person name="Jamison J.J."/>
            <person name="MacDonald I.J."/>
            <person name="Martin K.M."/>
            <person name="Russo T."/>
            <person name="Campagnari A.A."/>
            <person name="Hujer A.M."/>
            <person name="Bonomo R.A."/>
            <person name="Gill S.R."/>
        </authorList>
    </citation>
    <scope>NUCLEOTIDE SEQUENCE [LARGE SCALE GENOMIC DNA]</scope>
    <source>
        <strain>AB0057</strain>
    </source>
</reference>
<protein>
    <recommendedName>
        <fullName evidence="1">Urease accessory protein UreG</fullName>
    </recommendedName>
</protein>
<organism>
    <name type="scientific">Acinetobacter baumannii (strain AB0057)</name>
    <dbReference type="NCBI Taxonomy" id="480119"/>
    <lineage>
        <taxon>Bacteria</taxon>
        <taxon>Pseudomonadati</taxon>
        <taxon>Pseudomonadota</taxon>
        <taxon>Gammaproteobacteria</taxon>
        <taxon>Moraxellales</taxon>
        <taxon>Moraxellaceae</taxon>
        <taxon>Acinetobacter</taxon>
        <taxon>Acinetobacter calcoaceticus/baumannii complex</taxon>
    </lineage>
</organism>
<accession>B7I8T8</accession>
<comment type="function">
    <text evidence="1">Facilitates the functional incorporation of the urease nickel metallocenter. This process requires GTP hydrolysis, probably effectuated by UreG.</text>
</comment>
<comment type="subunit">
    <text evidence="1">Homodimer. UreD, UreF and UreG form a complex that acts as a GTP-hydrolysis-dependent molecular chaperone, activating the urease apoprotein by helping to assemble the nickel containing metallocenter of UreC. The UreE protein probably delivers the nickel.</text>
</comment>
<comment type="subcellular location">
    <subcellularLocation>
        <location evidence="1">Cytoplasm</location>
    </subcellularLocation>
</comment>
<comment type="similarity">
    <text evidence="1">Belongs to the SIMIBI class G3E GTPase family. UreG subfamily.</text>
</comment>
<gene>
    <name evidence="1" type="primary">ureG</name>
    <name type="ordered locus">AB57_1097</name>
</gene>
<evidence type="ECO:0000255" key="1">
    <source>
        <dbReference type="HAMAP-Rule" id="MF_01389"/>
    </source>
</evidence>
<keyword id="KW-0143">Chaperone</keyword>
<keyword id="KW-0963">Cytoplasm</keyword>
<keyword id="KW-0342">GTP-binding</keyword>
<keyword id="KW-0996">Nickel insertion</keyword>
<keyword id="KW-0547">Nucleotide-binding</keyword>
<sequence>MTERSPLRVGIGGPVGSGKTALTLNLCRALRDKYNMAVVTNDIYTKEDSNFLTRNEAMSPDRIVGVETGGCPHTAIREDASINLAAIDDLCEKFDGLELIIIESGGDNLAATFSPELSDLTLYVIDVAGGEKIPRKGGPGITKSDLLIINKTDLAPMVGANLDVMDQDAKRMRGEKPFLFSNMKTQDGLEEIIQFIEKQGLFKA</sequence>
<proteinExistence type="inferred from homology"/>
<dbReference type="EMBL" id="CP001182">
    <property type="protein sequence ID" value="ACJ40882.1"/>
    <property type="molecule type" value="Genomic_DNA"/>
</dbReference>
<dbReference type="RefSeq" id="WP_000140200.1">
    <property type="nucleotide sequence ID" value="NC_011586.2"/>
</dbReference>
<dbReference type="SMR" id="B7I8T8"/>
<dbReference type="GeneID" id="92892980"/>
<dbReference type="KEGG" id="abn:AB57_1097"/>
<dbReference type="HOGENOM" id="CLU_072144_1_0_6"/>
<dbReference type="Proteomes" id="UP000007094">
    <property type="component" value="Chromosome"/>
</dbReference>
<dbReference type="GO" id="GO:0005737">
    <property type="term" value="C:cytoplasm"/>
    <property type="evidence" value="ECO:0007669"/>
    <property type="project" value="UniProtKB-SubCell"/>
</dbReference>
<dbReference type="GO" id="GO:0005525">
    <property type="term" value="F:GTP binding"/>
    <property type="evidence" value="ECO:0007669"/>
    <property type="project" value="UniProtKB-KW"/>
</dbReference>
<dbReference type="GO" id="GO:0003924">
    <property type="term" value="F:GTPase activity"/>
    <property type="evidence" value="ECO:0007669"/>
    <property type="project" value="InterPro"/>
</dbReference>
<dbReference type="GO" id="GO:0016151">
    <property type="term" value="F:nickel cation binding"/>
    <property type="evidence" value="ECO:0007669"/>
    <property type="project" value="UniProtKB-UniRule"/>
</dbReference>
<dbReference type="GO" id="GO:0043419">
    <property type="term" value="P:urea catabolic process"/>
    <property type="evidence" value="ECO:0007669"/>
    <property type="project" value="InterPro"/>
</dbReference>
<dbReference type="CDD" id="cd05540">
    <property type="entry name" value="UreG"/>
    <property type="match status" value="1"/>
</dbReference>
<dbReference type="FunFam" id="3.40.50.300:FF:000208">
    <property type="entry name" value="Urease accessory protein UreG"/>
    <property type="match status" value="1"/>
</dbReference>
<dbReference type="Gene3D" id="3.40.50.300">
    <property type="entry name" value="P-loop containing nucleotide triphosphate hydrolases"/>
    <property type="match status" value="1"/>
</dbReference>
<dbReference type="HAMAP" id="MF_01389">
    <property type="entry name" value="UreG"/>
    <property type="match status" value="1"/>
</dbReference>
<dbReference type="InterPro" id="IPR003495">
    <property type="entry name" value="CobW/HypB/UreG_nucleotide-bd"/>
</dbReference>
<dbReference type="InterPro" id="IPR027417">
    <property type="entry name" value="P-loop_NTPase"/>
</dbReference>
<dbReference type="InterPro" id="IPR004400">
    <property type="entry name" value="UreG"/>
</dbReference>
<dbReference type="NCBIfam" id="TIGR00101">
    <property type="entry name" value="ureG"/>
    <property type="match status" value="1"/>
</dbReference>
<dbReference type="PANTHER" id="PTHR31715">
    <property type="entry name" value="UREASE ACCESSORY PROTEIN G"/>
    <property type="match status" value="1"/>
</dbReference>
<dbReference type="PANTHER" id="PTHR31715:SF0">
    <property type="entry name" value="UREASE ACCESSORY PROTEIN G"/>
    <property type="match status" value="1"/>
</dbReference>
<dbReference type="Pfam" id="PF02492">
    <property type="entry name" value="cobW"/>
    <property type="match status" value="1"/>
</dbReference>
<dbReference type="PIRSF" id="PIRSF005624">
    <property type="entry name" value="Ni-bind_GTPase"/>
    <property type="match status" value="1"/>
</dbReference>
<dbReference type="SUPFAM" id="SSF52540">
    <property type="entry name" value="P-loop containing nucleoside triphosphate hydrolases"/>
    <property type="match status" value="1"/>
</dbReference>